<organism>
    <name type="scientific">Salmonella typhi</name>
    <dbReference type="NCBI Taxonomy" id="90370"/>
    <lineage>
        <taxon>Bacteria</taxon>
        <taxon>Pseudomonadati</taxon>
        <taxon>Pseudomonadota</taxon>
        <taxon>Gammaproteobacteria</taxon>
        <taxon>Enterobacterales</taxon>
        <taxon>Enterobacteriaceae</taxon>
        <taxon>Salmonella</taxon>
    </lineage>
</organism>
<sequence length="623" mass="69149">MPHSDELDSRDVLSVSGLNIAFHHEGQQVDAVRNVSLRLKRGETLTIVGESGSGKSVTALALMRLIEQSGANVRCGEMLLRRRNRQVIELSEQSDAQMRRVRGADIAMIFQEPMTSLNPVFTVGEQIAESIRLHQGASHEEALAEAKRMLDQVRIPESQAILSRYPHQLSGGMRQRVMIAMALSCRPAVLIADEPTTALDVTIQAQILQLIKVLQQEMSMGVIFITHDMGVVADIADRVLVMYQGEAVETGSVEQIFHAPTHPYTQTLLAAVPQLGAMRGHSLPRRFPLISADEPALYESQIEQDTVVEGEPILQVRGLVTRFPLRSGLFNRVTREVHAVENISFDLWPGETLSLVGESGSGKSTTGRALLRLVESRQGEIIFNGQRIDTLSAGKLQPLRRDIQCIFQDPYASLDPRQTVGYSIMEPLRIHGLGQGDAAAKRVAWLLERVGLRPEHAWRYPHEFSGGQRQRICIARALALNPKVIIADEAVSALDVSVRGQIINLLLDLQREMGIAYLFISHDMAVVERISHRVAVMYLGQIVEMGPRRAVFENPQHPYTRKLMAAVPVADPSRHRPRRVLLSDDIPSNIHKRGEETPAVSLQLVGPGHYVARPLQDNALSRL</sequence>
<feature type="chain" id="PRO_0000280025" description="Glutathione import ATP-binding protein GsiA">
    <location>
        <begin position="1"/>
        <end position="623"/>
    </location>
</feature>
<feature type="domain" description="ABC transporter 1" evidence="2">
    <location>
        <begin position="15"/>
        <end position="269"/>
    </location>
</feature>
<feature type="domain" description="ABC transporter 2" evidence="2">
    <location>
        <begin position="325"/>
        <end position="564"/>
    </location>
</feature>
<feature type="binding site" evidence="2">
    <location>
        <begin position="49"/>
        <end position="56"/>
    </location>
    <ligand>
        <name>ATP</name>
        <dbReference type="ChEBI" id="CHEBI:30616"/>
    </ligand>
</feature>
<feature type="binding site" evidence="2">
    <location>
        <begin position="357"/>
        <end position="364"/>
    </location>
    <ligand>
        <name>ATP</name>
        <dbReference type="ChEBI" id="CHEBI:30616"/>
    </ligand>
</feature>
<gene>
    <name evidence="1" type="primary">gsiA</name>
    <name type="ordered locus">STY0887</name>
    <name type="ordered locus">t2041</name>
</gene>
<reference key="1">
    <citation type="journal article" date="2001" name="Nature">
        <title>Complete genome sequence of a multiple drug resistant Salmonella enterica serovar Typhi CT18.</title>
        <authorList>
            <person name="Parkhill J."/>
            <person name="Dougan G."/>
            <person name="James K.D."/>
            <person name="Thomson N.R."/>
            <person name="Pickard D."/>
            <person name="Wain J."/>
            <person name="Churcher C.M."/>
            <person name="Mungall K.L."/>
            <person name="Bentley S.D."/>
            <person name="Holden M.T.G."/>
            <person name="Sebaihia M."/>
            <person name="Baker S."/>
            <person name="Basham D."/>
            <person name="Brooks K."/>
            <person name="Chillingworth T."/>
            <person name="Connerton P."/>
            <person name="Cronin A."/>
            <person name="Davis P."/>
            <person name="Davies R.M."/>
            <person name="Dowd L."/>
            <person name="White N."/>
            <person name="Farrar J."/>
            <person name="Feltwell T."/>
            <person name="Hamlin N."/>
            <person name="Haque A."/>
            <person name="Hien T.T."/>
            <person name="Holroyd S."/>
            <person name="Jagels K."/>
            <person name="Krogh A."/>
            <person name="Larsen T.S."/>
            <person name="Leather S."/>
            <person name="Moule S."/>
            <person name="O'Gaora P."/>
            <person name="Parry C."/>
            <person name="Quail M.A."/>
            <person name="Rutherford K.M."/>
            <person name="Simmonds M."/>
            <person name="Skelton J."/>
            <person name="Stevens K."/>
            <person name="Whitehead S."/>
            <person name="Barrell B.G."/>
        </authorList>
    </citation>
    <scope>NUCLEOTIDE SEQUENCE [LARGE SCALE GENOMIC DNA]</scope>
    <source>
        <strain>CT18</strain>
    </source>
</reference>
<reference key="2">
    <citation type="journal article" date="2003" name="J. Bacteriol.">
        <title>Comparative genomics of Salmonella enterica serovar Typhi strains Ty2 and CT18.</title>
        <authorList>
            <person name="Deng W."/>
            <person name="Liou S.-R."/>
            <person name="Plunkett G. III"/>
            <person name="Mayhew G.F."/>
            <person name="Rose D.J."/>
            <person name="Burland V."/>
            <person name="Kodoyianni V."/>
            <person name="Schwartz D.C."/>
            <person name="Blattner F.R."/>
        </authorList>
    </citation>
    <scope>NUCLEOTIDE SEQUENCE [LARGE SCALE GENOMIC DNA]</scope>
    <source>
        <strain>ATCC 700931 / Ty2</strain>
    </source>
</reference>
<accession>Q8Z864</accession>
<accession>Q7C8T6</accession>
<protein>
    <recommendedName>
        <fullName evidence="1">Glutathione import ATP-binding protein GsiA</fullName>
        <ecNumber evidence="1">7.4.2.10</ecNumber>
    </recommendedName>
</protein>
<keyword id="KW-0067">ATP-binding</keyword>
<keyword id="KW-0997">Cell inner membrane</keyword>
<keyword id="KW-1003">Cell membrane</keyword>
<keyword id="KW-0378">Hydrolase</keyword>
<keyword id="KW-0472">Membrane</keyword>
<keyword id="KW-0547">Nucleotide-binding</keyword>
<keyword id="KW-0677">Repeat</keyword>
<keyword id="KW-1278">Translocase</keyword>
<keyword id="KW-0813">Transport</keyword>
<name>GSIA_SALTI</name>
<comment type="function">
    <text evidence="1">Part of the ABC transporter complex GsiABCD involved in glutathione import. Responsible for energy coupling to the transport system.</text>
</comment>
<comment type="catalytic activity">
    <reaction evidence="1">
        <text>glutathione(out) + ATP + H2O = glutathione(in) + ADP + phosphate + H(+)</text>
        <dbReference type="Rhea" id="RHEA:29791"/>
        <dbReference type="ChEBI" id="CHEBI:15377"/>
        <dbReference type="ChEBI" id="CHEBI:15378"/>
        <dbReference type="ChEBI" id="CHEBI:30616"/>
        <dbReference type="ChEBI" id="CHEBI:43474"/>
        <dbReference type="ChEBI" id="CHEBI:57925"/>
        <dbReference type="ChEBI" id="CHEBI:456216"/>
        <dbReference type="EC" id="7.4.2.10"/>
    </reaction>
</comment>
<comment type="subunit">
    <text evidence="1">The complex is composed of two ATP-binding proteins (GsiA), two transmembrane proteins (GsiC and GsiD) and a solute-binding protein (GsiB).</text>
</comment>
<comment type="subcellular location">
    <subcellularLocation>
        <location evidence="1">Cell inner membrane</location>
        <topology evidence="1">Peripheral membrane protein</topology>
    </subcellularLocation>
</comment>
<comment type="similarity">
    <text evidence="3">Belongs to the ABC transporter superfamily. Glutathione importer (TC 3.A.1.5.11) family.</text>
</comment>
<proteinExistence type="inferred from homology"/>
<dbReference type="EC" id="7.4.2.10" evidence="1"/>
<dbReference type="EMBL" id="AL513382">
    <property type="protein sequence ID" value="CAD05294.1"/>
    <property type="molecule type" value="Genomic_DNA"/>
</dbReference>
<dbReference type="EMBL" id="AE014613">
    <property type="protein sequence ID" value="AAO69653.1"/>
    <property type="molecule type" value="Genomic_DNA"/>
</dbReference>
<dbReference type="RefSeq" id="NP_455382.1">
    <property type="nucleotide sequence ID" value="NC_003198.1"/>
</dbReference>
<dbReference type="RefSeq" id="WP_001120605.1">
    <property type="nucleotide sequence ID" value="NZ_WSUR01000019.1"/>
</dbReference>
<dbReference type="SMR" id="Q8Z864"/>
<dbReference type="STRING" id="220341.gene:17584884"/>
<dbReference type="KEGG" id="stt:t2041"/>
<dbReference type="KEGG" id="sty:STY0887"/>
<dbReference type="PATRIC" id="fig|220341.7.peg.896"/>
<dbReference type="eggNOG" id="COG4172">
    <property type="taxonomic scope" value="Bacteria"/>
</dbReference>
<dbReference type="HOGENOM" id="CLU_000604_86_2_6"/>
<dbReference type="OMA" id="KSFPHEF"/>
<dbReference type="OrthoDB" id="9784450at2"/>
<dbReference type="Proteomes" id="UP000000541">
    <property type="component" value="Chromosome"/>
</dbReference>
<dbReference type="Proteomes" id="UP000002670">
    <property type="component" value="Chromosome"/>
</dbReference>
<dbReference type="GO" id="GO:0005886">
    <property type="term" value="C:plasma membrane"/>
    <property type="evidence" value="ECO:0007669"/>
    <property type="project" value="UniProtKB-SubCell"/>
</dbReference>
<dbReference type="GO" id="GO:0005524">
    <property type="term" value="F:ATP binding"/>
    <property type="evidence" value="ECO:0007669"/>
    <property type="project" value="UniProtKB-KW"/>
</dbReference>
<dbReference type="GO" id="GO:0016887">
    <property type="term" value="F:ATP hydrolysis activity"/>
    <property type="evidence" value="ECO:0007669"/>
    <property type="project" value="InterPro"/>
</dbReference>
<dbReference type="GO" id="GO:0015833">
    <property type="term" value="P:peptide transport"/>
    <property type="evidence" value="ECO:0007669"/>
    <property type="project" value="InterPro"/>
</dbReference>
<dbReference type="GO" id="GO:0055085">
    <property type="term" value="P:transmembrane transport"/>
    <property type="evidence" value="ECO:0007669"/>
    <property type="project" value="UniProtKB-ARBA"/>
</dbReference>
<dbReference type="CDD" id="cd03257">
    <property type="entry name" value="ABC_NikE_OppD_transporters"/>
    <property type="match status" value="2"/>
</dbReference>
<dbReference type="FunFam" id="3.40.50.300:FF:000016">
    <property type="entry name" value="Oligopeptide ABC transporter ATP-binding component"/>
    <property type="match status" value="2"/>
</dbReference>
<dbReference type="Gene3D" id="3.40.50.300">
    <property type="entry name" value="P-loop containing nucleotide triphosphate hydrolases"/>
    <property type="match status" value="2"/>
</dbReference>
<dbReference type="InterPro" id="IPR003593">
    <property type="entry name" value="AAA+_ATPase"/>
</dbReference>
<dbReference type="InterPro" id="IPR050319">
    <property type="entry name" value="ABC_transp_ATP-bind"/>
</dbReference>
<dbReference type="InterPro" id="IPR003439">
    <property type="entry name" value="ABC_transporter-like_ATP-bd"/>
</dbReference>
<dbReference type="InterPro" id="IPR017871">
    <property type="entry name" value="ABC_transporter-like_CS"/>
</dbReference>
<dbReference type="InterPro" id="IPR013563">
    <property type="entry name" value="Oligopep_ABC_C"/>
</dbReference>
<dbReference type="InterPro" id="IPR027417">
    <property type="entry name" value="P-loop_NTPase"/>
</dbReference>
<dbReference type="NCBIfam" id="NF007613">
    <property type="entry name" value="PRK10261.1"/>
    <property type="match status" value="1"/>
</dbReference>
<dbReference type="NCBIfam" id="NF007739">
    <property type="entry name" value="PRK10419.1"/>
    <property type="match status" value="2"/>
</dbReference>
<dbReference type="NCBIfam" id="NF008453">
    <property type="entry name" value="PRK11308.1"/>
    <property type="match status" value="2"/>
</dbReference>
<dbReference type="PANTHER" id="PTHR43776:SF15">
    <property type="entry name" value="GLUTATHIONE IMPORT ATP-BINDING PROTEIN GSIA"/>
    <property type="match status" value="1"/>
</dbReference>
<dbReference type="PANTHER" id="PTHR43776">
    <property type="entry name" value="TRANSPORT ATP-BINDING PROTEIN"/>
    <property type="match status" value="1"/>
</dbReference>
<dbReference type="Pfam" id="PF00005">
    <property type="entry name" value="ABC_tran"/>
    <property type="match status" value="2"/>
</dbReference>
<dbReference type="Pfam" id="PF08352">
    <property type="entry name" value="oligo_HPY"/>
    <property type="match status" value="2"/>
</dbReference>
<dbReference type="SMART" id="SM00382">
    <property type="entry name" value="AAA"/>
    <property type="match status" value="2"/>
</dbReference>
<dbReference type="SUPFAM" id="SSF52540">
    <property type="entry name" value="P-loop containing nucleoside triphosphate hydrolases"/>
    <property type="match status" value="2"/>
</dbReference>
<dbReference type="PROSITE" id="PS00211">
    <property type="entry name" value="ABC_TRANSPORTER_1"/>
    <property type="match status" value="2"/>
</dbReference>
<dbReference type="PROSITE" id="PS50893">
    <property type="entry name" value="ABC_TRANSPORTER_2"/>
    <property type="match status" value="2"/>
</dbReference>
<evidence type="ECO:0000250" key="1">
    <source>
        <dbReference type="UniProtKB" id="P75796"/>
    </source>
</evidence>
<evidence type="ECO:0000255" key="2">
    <source>
        <dbReference type="PROSITE-ProRule" id="PRU00434"/>
    </source>
</evidence>
<evidence type="ECO:0000305" key="3"/>